<comment type="function">
    <text evidence="1">Transports viral genome to neighboring plant cells directly through plasmosdesmata, without any budding. The movement protein allows efficient cell to cell propagation, by bypassing the host cell wall barrier. Two movement proteins, p6, Hsp70h and three structural proteins, CP, CPm, and P64 are essential for cell-cell movement. Also plays a role in virion formation. Together with CPm and p64, encapsidates the 5'-terminal portion of the viral genome (By similarity).</text>
</comment>
<comment type="subcellular location">
    <subcellularLocation>
        <location evidence="1">Virion</location>
    </subcellularLocation>
</comment>
<comment type="similarity">
    <text evidence="2">Belongs to the heat shock protein 70 family.</text>
</comment>
<protein>
    <recommendedName>
        <fullName>Movement protein Hsp70h</fullName>
    </recommendedName>
    <alternativeName>
        <fullName>Heat shock protein 70 homolog</fullName>
        <shortName>Hsp70h</shortName>
    </alternativeName>
</protein>
<accession>Q83047</accession>
<organism>
    <name type="scientific">Lettuce infectious yellows virus (isolate United States/92)</name>
    <name type="common">LIYV</name>
    <dbReference type="NCBI Taxonomy" id="651355"/>
    <lineage>
        <taxon>Viruses</taxon>
        <taxon>Riboviria</taxon>
        <taxon>Orthornavirae</taxon>
        <taxon>Kitrinoviricota</taxon>
        <taxon>Alsuviricetes</taxon>
        <taxon>Martellivirales</taxon>
        <taxon>Closteroviridae</taxon>
        <taxon>Crinivirus</taxon>
        <taxon>Lettuce infectious yellows virus</taxon>
    </lineage>
</organism>
<name>MVP_LIYV9</name>
<feature type="chain" id="PRO_0000402535" description="Movement protein Hsp70h">
    <location>
        <begin position="1"/>
        <end position="554"/>
    </location>
</feature>
<keyword id="KW-0067">ATP-binding</keyword>
<keyword id="KW-0143">Chaperone</keyword>
<keyword id="KW-0547">Nucleotide-binding</keyword>
<keyword id="KW-1185">Reference proteome</keyword>
<keyword id="KW-0946">Virion</keyword>
<dbReference type="EMBL" id="U15441">
    <property type="protein sequence ID" value="AAA61800.1"/>
    <property type="molecule type" value="Genomic_RNA"/>
</dbReference>
<dbReference type="RefSeq" id="NP_619695.1">
    <property type="nucleotide sequence ID" value="NC_003618.1"/>
</dbReference>
<dbReference type="SMR" id="Q83047"/>
<dbReference type="GeneID" id="991075"/>
<dbReference type="KEGG" id="vg:991075"/>
<dbReference type="Proteomes" id="UP000001099">
    <property type="component" value="Genome"/>
</dbReference>
<dbReference type="GO" id="GO:0044423">
    <property type="term" value="C:virion component"/>
    <property type="evidence" value="ECO:0007669"/>
    <property type="project" value="UniProtKB-KW"/>
</dbReference>
<dbReference type="GO" id="GO:0005524">
    <property type="term" value="F:ATP binding"/>
    <property type="evidence" value="ECO:0007669"/>
    <property type="project" value="UniProtKB-KW"/>
</dbReference>
<dbReference type="GO" id="GO:0140662">
    <property type="term" value="F:ATP-dependent protein folding chaperone"/>
    <property type="evidence" value="ECO:0007669"/>
    <property type="project" value="InterPro"/>
</dbReference>
<dbReference type="Gene3D" id="3.30.420.40">
    <property type="match status" value="2"/>
</dbReference>
<dbReference type="Gene3D" id="3.90.640.10">
    <property type="entry name" value="Actin, Chain A, domain 4"/>
    <property type="match status" value="1"/>
</dbReference>
<dbReference type="InterPro" id="IPR043129">
    <property type="entry name" value="ATPase_NBD"/>
</dbReference>
<dbReference type="InterPro" id="IPR018181">
    <property type="entry name" value="Heat_shock_70_CS"/>
</dbReference>
<dbReference type="InterPro" id="IPR029047">
    <property type="entry name" value="HSP70_peptide-bd_sf"/>
</dbReference>
<dbReference type="InterPro" id="IPR013126">
    <property type="entry name" value="Hsp_70_fam"/>
</dbReference>
<dbReference type="PANTHER" id="PTHR19375">
    <property type="entry name" value="HEAT SHOCK PROTEIN 70KDA"/>
    <property type="match status" value="1"/>
</dbReference>
<dbReference type="Pfam" id="PF00012">
    <property type="entry name" value="HSP70"/>
    <property type="match status" value="1"/>
</dbReference>
<dbReference type="PRINTS" id="PR00301">
    <property type="entry name" value="HEATSHOCK70"/>
</dbReference>
<dbReference type="SUPFAM" id="SSF53067">
    <property type="entry name" value="Actin-like ATPase domain"/>
    <property type="match status" value="2"/>
</dbReference>
<dbReference type="SUPFAM" id="SSF100920">
    <property type="entry name" value="Heat shock protein 70kD (HSP70), peptide-binding domain"/>
    <property type="match status" value="1"/>
</dbReference>
<dbReference type="PROSITE" id="PS00329">
    <property type="entry name" value="HSP70_2"/>
    <property type="match status" value="1"/>
</dbReference>
<organismHost>
    <name type="scientific">Beta vulgaris</name>
    <name type="common">Sugar beet</name>
    <dbReference type="NCBI Taxonomy" id="161934"/>
</organismHost>
<organismHost>
    <name type="scientific">Citrullus lanatus</name>
    <name type="common">Watermelon</name>
    <name type="synonym">Citrullus vulgaris</name>
    <dbReference type="NCBI Taxonomy" id="3654"/>
</organismHost>
<organismHost>
    <name type="scientific">Cucumis melo</name>
    <name type="common">Muskmelon</name>
    <dbReference type="NCBI Taxonomy" id="3656"/>
</organismHost>
<organismHost>
    <name type="scientific">Cucurbita maxima</name>
    <name type="common">Pumpkin</name>
    <name type="synonym">Winter squash</name>
    <dbReference type="NCBI Taxonomy" id="3661"/>
</organismHost>
<organismHost>
    <name type="scientific">Cucurbita moschata</name>
    <name type="common">Winter crookneck squash</name>
    <name type="synonym">Cucurbita pepo var. moschata</name>
    <dbReference type="NCBI Taxonomy" id="3662"/>
</organismHost>
<organismHost>
    <name type="scientific">Cucurbita pepo</name>
    <name type="common">Vegetable marrow</name>
    <name type="synonym">Summer squash</name>
    <dbReference type="NCBI Taxonomy" id="3663"/>
</organismHost>
<organismHost>
    <name type="scientific">Daucus carota</name>
    <name type="common">Wild carrot</name>
    <dbReference type="NCBI Taxonomy" id="4039"/>
</organismHost>
<organismHost>
    <name type="scientific">Lactuca sativa</name>
    <name type="common">Garden lettuce</name>
    <dbReference type="NCBI Taxonomy" id="4236"/>
</organismHost>
<reference key="1">
    <citation type="journal article" date="1995" name="Virology">
        <title>Genome structure and phylogenetic analysis of lettuce infectious yellows virus, a whitefly-transmitted, bipartite closterovirus.</title>
        <authorList>
            <person name="Klaassen V.A."/>
            <person name="Boeshore M.L."/>
            <person name="Koonin E.V."/>
            <person name="Tian T."/>
            <person name="Falk B.W."/>
        </authorList>
    </citation>
    <scope>NUCLEOTIDE SEQUENCE [GENOMIC RNA]</scope>
</reference>
<reference key="2">
    <citation type="journal article" date="1999" name="J. Gen. Virol.">
        <title>Lettuce infectious yellows virus: in vitro acquisition analysis using partially purified virions and the whitefly Bemisia tabaci.</title>
        <authorList>
            <person name="Tian T."/>
            <person name="Rubio L."/>
            <person name="Yeh H.H."/>
            <person name="Crawford B."/>
            <person name="Falk B.W."/>
        </authorList>
    </citation>
    <scope>SUBCELLULAR LOCATION</scope>
</reference>
<sequence length="554" mass="62277">MRDCKVGLDFGTTFSTVSTLVNNSMYVLRLGDSAYIPTCIAITPGGEAIIGGAAEVLSGDDTPHCFFYDLKRWVGVDDNTFKFAMNKIRPKYVAELVEGEVYLTGINKGFSIKLSVKQLIKAYIETIVRLLASSYSLRVIDLNQSVPADYKNAQRLAARSVLKALSFPCRRIINEPSAAAVYCVSRYPNYNYFLVYDFGGGTFDVSLIGKYKSYVTVIDTEGDSFLGGRDIDKSIEDYLVGKYNIKKVIPATYLALIKEECNNTNKSIFTILFDDGSVQVVEFSKSELEKCVRPFVERSIKLINDVVVRNKLTSGVIYMVGGSSLLQPVQDMVRSYASTKGLTLVADQDMRSAVSYGCSVLHKLEDNKEIVYIDCNSHPLSDISFNCDPEPIIRKPMSIPYTHTVKMRHDRPLKTIVNIYEGSNLFMPENDWLISSNINTTDFAKVGEEYSKVYEYDIDGIITLKIRNEVTGKMFTLPNSFTKSDNIKPITFKLTQLSNTDDLATLTSLLGYHDKNFERFYGLFNVPTILIKEIDKLGGFKTLYRRLKSMNANF</sequence>
<evidence type="ECO:0000250" key="1"/>
<evidence type="ECO:0000305" key="2"/>
<proteinExistence type="inferred from homology"/>